<comment type="function">
    <text evidence="1">Catalyzes the ferrous insertion into protoporphyrin IX.</text>
</comment>
<comment type="catalytic activity">
    <reaction evidence="1">
        <text>heme b + 2 H(+) = protoporphyrin IX + Fe(2+)</text>
        <dbReference type="Rhea" id="RHEA:22584"/>
        <dbReference type="ChEBI" id="CHEBI:15378"/>
        <dbReference type="ChEBI" id="CHEBI:29033"/>
        <dbReference type="ChEBI" id="CHEBI:57306"/>
        <dbReference type="ChEBI" id="CHEBI:60344"/>
        <dbReference type="EC" id="4.98.1.1"/>
    </reaction>
</comment>
<comment type="pathway">
    <text evidence="1">Porphyrin-containing compound metabolism; protoheme biosynthesis; protoheme from protoporphyrin-IX: step 1/1.</text>
</comment>
<comment type="subcellular location">
    <subcellularLocation>
        <location evidence="1">Cytoplasm</location>
    </subcellularLocation>
</comment>
<comment type="similarity">
    <text evidence="1">Belongs to the ferrochelatase family.</text>
</comment>
<name>HEMH_CROS8</name>
<dbReference type="EC" id="4.98.1.1" evidence="1"/>
<dbReference type="EMBL" id="CP000783">
    <property type="protein sequence ID" value="ABU78018.1"/>
    <property type="molecule type" value="Genomic_DNA"/>
</dbReference>
<dbReference type="RefSeq" id="WP_004387931.1">
    <property type="nucleotide sequence ID" value="NC_009778.1"/>
</dbReference>
<dbReference type="SMR" id="A7MNM8"/>
<dbReference type="KEGG" id="esa:ESA_02788"/>
<dbReference type="HOGENOM" id="CLU_018884_0_0_6"/>
<dbReference type="UniPathway" id="UPA00252">
    <property type="reaction ID" value="UER00325"/>
</dbReference>
<dbReference type="Proteomes" id="UP000000260">
    <property type="component" value="Chromosome"/>
</dbReference>
<dbReference type="GO" id="GO:0005737">
    <property type="term" value="C:cytoplasm"/>
    <property type="evidence" value="ECO:0007669"/>
    <property type="project" value="UniProtKB-SubCell"/>
</dbReference>
<dbReference type="GO" id="GO:0004325">
    <property type="term" value="F:ferrochelatase activity"/>
    <property type="evidence" value="ECO:0007669"/>
    <property type="project" value="UniProtKB-UniRule"/>
</dbReference>
<dbReference type="GO" id="GO:0046872">
    <property type="term" value="F:metal ion binding"/>
    <property type="evidence" value="ECO:0007669"/>
    <property type="project" value="UniProtKB-KW"/>
</dbReference>
<dbReference type="GO" id="GO:0006783">
    <property type="term" value="P:heme biosynthetic process"/>
    <property type="evidence" value="ECO:0007669"/>
    <property type="project" value="UniProtKB-UniRule"/>
</dbReference>
<dbReference type="CDD" id="cd00419">
    <property type="entry name" value="Ferrochelatase_C"/>
    <property type="match status" value="1"/>
</dbReference>
<dbReference type="CDD" id="cd03411">
    <property type="entry name" value="Ferrochelatase_N"/>
    <property type="match status" value="1"/>
</dbReference>
<dbReference type="FunFam" id="3.40.50.1400:FF:000004">
    <property type="entry name" value="Ferrochelatase"/>
    <property type="match status" value="1"/>
</dbReference>
<dbReference type="Gene3D" id="3.40.50.1400">
    <property type="match status" value="2"/>
</dbReference>
<dbReference type="HAMAP" id="MF_00323">
    <property type="entry name" value="Ferrochelatase"/>
    <property type="match status" value="1"/>
</dbReference>
<dbReference type="InterPro" id="IPR001015">
    <property type="entry name" value="Ferrochelatase"/>
</dbReference>
<dbReference type="InterPro" id="IPR019772">
    <property type="entry name" value="Ferrochelatase_AS"/>
</dbReference>
<dbReference type="InterPro" id="IPR033644">
    <property type="entry name" value="Ferrochelatase_C"/>
</dbReference>
<dbReference type="InterPro" id="IPR033659">
    <property type="entry name" value="Ferrochelatase_N"/>
</dbReference>
<dbReference type="NCBIfam" id="TIGR00109">
    <property type="entry name" value="hemH"/>
    <property type="match status" value="1"/>
</dbReference>
<dbReference type="PANTHER" id="PTHR11108">
    <property type="entry name" value="FERROCHELATASE"/>
    <property type="match status" value="1"/>
</dbReference>
<dbReference type="PANTHER" id="PTHR11108:SF1">
    <property type="entry name" value="FERROCHELATASE, MITOCHONDRIAL"/>
    <property type="match status" value="1"/>
</dbReference>
<dbReference type="Pfam" id="PF00762">
    <property type="entry name" value="Ferrochelatase"/>
    <property type="match status" value="1"/>
</dbReference>
<dbReference type="SUPFAM" id="SSF53800">
    <property type="entry name" value="Chelatase"/>
    <property type="match status" value="1"/>
</dbReference>
<dbReference type="PROSITE" id="PS00534">
    <property type="entry name" value="FERROCHELATASE"/>
    <property type="match status" value="1"/>
</dbReference>
<sequence length="320" mass="36343">MQSVKSGVLLVNLGTPQAPTPAAVKRYLKQFLSDRRVVDVPRFIWWPLLRGVILPLRSPRVAKLYKSIWMEEGSPLMVYSRRQEKALSAALGDVPVALGMSYGQPSLDSAVQKLLDQHVDHIIVLALYPQYSCSTVAAVWDELARITARYRKLPSMTLIRDYACEPAYISALAQSVQRSFEKHGEPDLLLLSYHGIPQRYADEGDDYPQRCRDTTRELVSALGIAPEKVMMTFQSRFGREPWLTPYTDETMKMLGEKGVKHIQVMCPGFSSDCLETLEEIAEQNREIFIEAGGEKYEYIPALNDEPAHIAMMKELVDRYR</sequence>
<proteinExistence type="inferred from homology"/>
<gene>
    <name evidence="1" type="primary">hemH</name>
    <name type="ordered locus">ESA_02788</name>
</gene>
<accession>A7MNM8</accession>
<feature type="chain" id="PRO_1000019297" description="Ferrochelatase">
    <location>
        <begin position="1"/>
        <end position="320"/>
    </location>
</feature>
<feature type="binding site" evidence="1">
    <location>
        <position position="194"/>
    </location>
    <ligand>
        <name>Fe cation</name>
        <dbReference type="ChEBI" id="CHEBI:24875"/>
    </ligand>
</feature>
<feature type="binding site" evidence="1">
    <location>
        <position position="275"/>
    </location>
    <ligand>
        <name>Fe cation</name>
        <dbReference type="ChEBI" id="CHEBI:24875"/>
    </ligand>
</feature>
<organism>
    <name type="scientific">Cronobacter sakazakii (strain ATCC BAA-894)</name>
    <name type="common">Enterobacter sakazakii</name>
    <dbReference type="NCBI Taxonomy" id="290339"/>
    <lineage>
        <taxon>Bacteria</taxon>
        <taxon>Pseudomonadati</taxon>
        <taxon>Pseudomonadota</taxon>
        <taxon>Gammaproteobacteria</taxon>
        <taxon>Enterobacterales</taxon>
        <taxon>Enterobacteriaceae</taxon>
        <taxon>Cronobacter</taxon>
    </lineage>
</organism>
<evidence type="ECO:0000255" key="1">
    <source>
        <dbReference type="HAMAP-Rule" id="MF_00323"/>
    </source>
</evidence>
<keyword id="KW-0963">Cytoplasm</keyword>
<keyword id="KW-0350">Heme biosynthesis</keyword>
<keyword id="KW-0408">Iron</keyword>
<keyword id="KW-0456">Lyase</keyword>
<keyword id="KW-0479">Metal-binding</keyword>
<keyword id="KW-0627">Porphyrin biosynthesis</keyword>
<keyword id="KW-1185">Reference proteome</keyword>
<reference key="1">
    <citation type="journal article" date="2010" name="PLoS ONE">
        <title>Genome sequence of Cronobacter sakazakii BAA-894 and comparative genomic hybridization analysis with other Cronobacter species.</title>
        <authorList>
            <person name="Kucerova E."/>
            <person name="Clifton S.W."/>
            <person name="Xia X.Q."/>
            <person name="Long F."/>
            <person name="Porwollik S."/>
            <person name="Fulton L."/>
            <person name="Fronick C."/>
            <person name="Minx P."/>
            <person name="Kyung K."/>
            <person name="Warren W."/>
            <person name="Fulton R."/>
            <person name="Feng D."/>
            <person name="Wollam A."/>
            <person name="Shah N."/>
            <person name="Bhonagiri V."/>
            <person name="Nash W.E."/>
            <person name="Hallsworth-Pepin K."/>
            <person name="Wilson R.K."/>
            <person name="McClelland M."/>
            <person name="Forsythe S.J."/>
        </authorList>
    </citation>
    <scope>NUCLEOTIDE SEQUENCE [LARGE SCALE GENOMIC DNA]</scope>
    <source>
        <strain>ATCC BAA-894</strain>
    </source>
</reference>
<protein>
    <recommendedName>
        <fullName evidence="1">Ferrochelatase</fullName>
        <ecNumber evidence="1">4.98.1.1</ecNumber>
    </recommendedName>
    <alternativeName>
        <fullName evidence="1">Heme synthase</fullName>
    </alternativeName>
    <alternativeName>
        <fullName evidence="1">Protoheme ferro-lyase</fullName>
    </alternativeName>
</protein>